<feature type="chain" id="PRO_1000002838" description="Crossover junction endodeoxyribonuclease RuvC">
    <location>
        <begin position="1"/>
        <end position="156"/>
    </location>
</feature>
<feature type="active site" evidence="1">
    <location>
        <position position="7"/>
    </location>
</feature>
<feature type="active site" evidence="1">
    <location>
        <position position="67"/>
    </location>
</feature>
<feature type="active site" evidence="1">
    <location>
        <position position="139"/>
    </location>
</feature>
<feature type="binding site" evidence="1">
    <location>
        <position position="7"/>
    </location>
    <ligand>
        <name>Mg(2+)</name>
        <dbReference type="ChEBI" id="CHEBI:18420"/>
        <label>1</label>
    </ligand>
</feature>
<feature type="binding site" evidence="1">
    <location>
        <position position="67"/>
    </location>
    <ligand>
        <name>Mg(2+)</name>
        <dbReference type="ChEBI" id="CHEBI:18420"/>
        <label>2</label>
    </ligand>
</feature>
<feature type="binding site" evidence="1">
    <location>
        <position position="139"/>
    </location>
    <ligand>
        <name>Mg(2+)</name>
        <dbReference type="ChEBI" id="CHEBI:18420"/>
        <label>1</label>
    </ligand>
</feature>
<sequence length="156" mass="16076">MIILGLDPSLSCTGWGLIRVEGSRISHIANGQIKTDAKAALPDRLVHLDTALAAVIADHAPKCAAVEEVFVNDNPQSTLKLAHARGVVLLGCARGGLTVTQYAPRLVKKAIVGTGGAAKGQVQAMLGVLLPGTKVAGPDAADALAVAICHANHRRR</sequence>
<evidence type="ECO:0000255" key="1">
    <source>
        <dbReference type="HAMAP-Rule" id="MF_00034"/>
    </source>
</evidence>
<protein>
    <recommendedName>
        <fullName evidence="1">Crossover junction endodeoxyribonuclease RuvC</fullName>
        <ecNumber evidence="1">3.1.21.10</ecNumber>
    </recommendedName>
    <alternativeName>
        <fullName evidence="1">Holliday junction nuclease RuvC</fullName>
    </alternativeName>
    <alternativeName>
        <fullName evidence="1">Holliday junction resolvase RuvC</fullName>
    </alternativeName>
</protein>
<gene>
    <name evidence="1" type="primary">ruvC</name>
    <name type="ordered locus">Sala_0336</name>
</gene>
<dbReference type="EC" id="3.1.21.10" evidence="1"/>
<dbReference type="EMBL" id="CP000356">
    <property type="protein sequence ID" value="ABF52059.1"/>
    <property type="molecule type" value="Genomic_DNA"/>
</dbReference>
<dbReference type="RefSeq" id="WP_011540650.1">
    <property type="nucleotide sequence ID" value="NC_008048.1"/>
</dbReference>
<dbReference type="SMR" id="Q1GWB3"/>
<dbReference type="STRING" id="317655.Sala_0336"/>
<dbReference type="KEGG" id="sal:Sala_0336"/>
<dbReference type="eggNOG" id="COG0817">
    <property type="taxonomic scope" value="Bacteria"/>
</dbReference>
<dbReference type="HOGENOM" id="CLU_091257_1_0_5"/>
<dbReference type="OrthoDB" id="9805499at2"/>
<dbReference type="Proteomes" id="UP000006578">
    <property type="component" value="Chromosome"/>
</dbReference>
<dbReference type="GO" id="GO:0005737">
    <property type="term" value="C:cytoplasm"/>
    <property type="evidence" value="ECO:0007669"/>
    <property type="project" value="UniProtKB-SubCell"/>
</dbReference>
<dbReference type="GO" id="GO:0048476">
    <property type="term" value="C:Holliday junction resolvase complex"/>
    <property type="evidence" value="ECO:0007669"/>
    <property type="project" value="UniProtKB-UniRule"/>
</dbReference>
<dbReference type="GO" id="GO:0008821">
    <property type="term" value="F:crossover junction DNA endonuclease activity"/>
    <property type="evidence" value="ECO:0007669"/>
    <property type="project" value="UniProtKB-UniRule"/>
</dbReference>
<dbReference type="GO" id="GO:0003677">
    <property type="term" value="F:DNA binding"/>
    <property type="evidence" value="ECO:0007669"/>
    <property type="project" value="UniProtKB-KW"/>
</dbReference>
<dbReference type="GO" id="GO:0000287">
    <property type="term" value="F:magnesium ion binding"/>
    <property type="evidence" value="ECO:0007669"/>
    <property type="project" value="UniProtKB-UniRule"/>
</dbReference>
<dbReference type="GO" id="GO:0006310">
    <property type="term" value="P:DNA recombination"/>
    <property type="evidence" value="ECO:0007669"/>
    <property type="project" value="UniProtKB-UniRule"/>
</dbReference>
<dbReference type="GO" id="GO:0006281">
    <property type="term" value="P:DNA repair"/>
    <property type="evidence" value="ECO:0007669"/>
    <property type="project" value="UniProtKB-UniRule"/>
</dbReference>
<dbReference type="CDD" id="cd16962">
    <property type="entry name" value="RuvC"/>
    <property type="match status" value="1"/>
</dbReference>
<dbReference type="FunFam" id="3.30.420.10:FF:000002">
    <property type="entry name" value="Crossover junction endodeoxyribonuclease RuvC"/>
    <property type="match status" value="1"/>
</dbReference>
<dbReference type="Gene3D" id="3.30.420.10">
    <property type="entry name" value="Ribonuclease H-like superfamily/Ribonuclease H"/>
    <property type="match status" value="1"/>
</dbReference>
<dbReference type="HAMAP" id="MF_00034">
    <property type="entry name" value="RuvC"/>
    <property type="match status" value="1"/>
</dbReference>
<dbReference type="InterPro" id="IPR012337">
    <property type="entry name" value="RNaseH-like_sf"/>
</dbReference>
<dbReference type="InterPro" id="IPR036397">
    <property type="entry name" value="RNaseH_sf"/>
</dbReference>
<dbReference type="InterPro" id="IPR020563">
    <property type="entry name" value="X-over_junc_endoDNase_Mg_BS"/>
</dbReference>
<dbReference type="InterPro" id="IPR002176">
    <property type="entry name" value="X-over_junc_endoDNase_RuvC"/>
</dbReference>
<dbReference type="NCBIfam" id="TIGR00228">
    <property type="entry name" value="ruvC"/>
    <property type="match status" value="1"/>
</dbReference>
<dbReference type="PANTHER" id="PTHR30194">
    <property type="entry name" value="CROSSOVER JUNCTION ENDODEOXYRIBONUCLEASE RUVC"/>
    <property type="match status" value="1"/>
</dbReference>
<dbReference type="PANTHER" id="PTHR30194:SF3">
    <property type="entry name" value="CROSSOVER JUNCTION ENDODEOXYRIBONUCLEASE RUVC"/>
    <property type="match status" value="1"/>
</dbReference>
<dbReference type="Pfam" id="PF02075">
    <property type="entry name" value="RuvC"/>
    <property type="match status" value="1"/>
</dbReference>
<dbReference type="PRINTS" id="PR00696">
    <property type="entry name" value="RSOLVASERUVC"/>
</dbReference>
<dbReference type="SUPFAM" id="SSF53098">
    <property type="entry name" value="Ribonuclease H-like"/>
    <property type="match status" value="1"/>
</dbReference>
<dbReference type="PROSITE" id="PS01321">
    <property type="entry name" value="RUVC"/>
    <property type="match status" value="1"/>
</dbReference>
<name>RUVC_SPHAL</name>
<proteinExistence type="inferred from homology"/>
<comment type="function">
    <text evidence="1">The RuvA-RuvB-RuvC complex processes Holliday junction (HJ) DNA during genetic recombination and DNA repair. Endonuclease that resolves HJ intermediates. Cleaves cruciform DNA by making single-stranded nicks across the HJ at symmetrical positions within the homologous arms, yielding a 5'-phosphate and a 3'-hydroxyl group; requires a central core of homology in the junction. The consensus cleavage sequence is 5'-(A/T)TT(C/G)-3'. Cleavage occurs on the 3'-side of the TT dinucleotide at the point of strand exchange. HJ branch migration catalyzed by RuvA-RuvB allows RuvC to scan DNA until it finds its consensus sequence, where it cleaves and resolves the cruciform DNA.</text>
</comment>
<comment type="catalytic activity">
    <reaction evidence="1">
        <text>Endonucleolytic cleavage at a junction such as a reciprocal single-stranded crossover between two homologous DNA duplexes (Holliday junction).</text>
        <dbReference type="EC" id="3.1.21.10"/>
    </reaction>
</comment>
<comment type="cofactor">
    <cofactor evidence="1">
        <name>Mg(2+)</name>
        <dbReference type="ChEBI" id="CHEBI:18420"/>
    </cofactor>
    <text evidence="1">Binds 2 Mg(2+) ion per subunit.</text>
</comment>
<comment type="subunit">
    <text evidence="1">Homodimer which binds Holliday junction (HJ) DNA. The HJ becomes 2-fold symmetrical on binding to RuvC with unstacked arms; it has a different conformation from HJ DNA in complex with RuvA. In the full resolvosome a probable DNA-RuvA(4)-RuvB(12)-RuvC(2) complex forms which resolves the HJ.</text>
</comment>
<comment type="subcellular location">
    <subcellularLocation>
        <location evidence="1">Cytoplasm</location>
    </subcellularLocation>
</comment>
<comment type="similarity">
    <text evidence="1">Belongs to the RuvC family.</text>
</comment>
<organism>
    <name type="scientific">Sphingopyxis alaskensis (strain DSM 13593 / LMG 18877 / RB2256)</name>
    <name type="common">Sphingomonas alaskensis</name>
    <dbReference type="NCBI Taxonomy" id="317655"/>
    <lineage>
        <taxon>Bacteria</taxon>
        <taxon>Pseudomonadati</taxon>
        <taxon>Pseudomonadota</taxon>
        <taxon>Alphaproteobacteria</taxon>
        <taxon>Sphingomonadales</taxon>
        <taxon>Sphingomonadaceae</taxon>
        <taxon>Sphingopyxis</taxon>
    </lineage>
</organism>
<keyword id="KW-0963">Cytoplasm</keyword>
<keyword id="KW-0227">DNA damage</keyword>
<keyword id="KW-0233">DNA recombination</keyword>
<keyword id="KW-0234">DNA repair</keyword>
<keyword id="KW-0238">DNA-binding</keyword>
<keyword id="KW-0255">Endonuclease</keyword>
<keyword id="KW-0378">Hydrolase</keyword>
<keyword id="KW-0460">Magnesium</keyword>
<keyword id="KW-0479">Metal-binding</keyword>
<keyword id="KW-0540">Nuclease</keyword>
<keyword id="KW-1185">Reference proteome</keyword>
<reference key="1">
    <citation type="journal article" date="2009" name="Proc. Natl. Acad. Sci. U.S.A.">
        <title>The genomic basis of trophic strategy in marine bacteria.</title>
        <authorList>
            <person name="Lauro F.M."/>
            <person name="McDougald D."/>
            <person name="Thomas T."/>
            <person name="Williams T.J."/>
            <person name="Egan S."/>
            <person name="Rice S."/>
            <person name="DeMaere M.Z."/>
            <person name="Ting L."/>
            <person name="Ertan H."/>
            <person name="Johnson J."/>
            <person name="Ferriera S."/>
            <person name="Lapidus A."/>
            <person name="Anderson I."/>
            <person name="Kyrpides N."/>
            <person name="Munk A.C."/>
            <person name="Detter C."/>
            <person name="Han C.S."/>
            <person name="Brown M.V."/>
            <person name="Robb F.T."/>
            <person name="Kjelleberg S."/>
            <person name="Cavicchioli R."/>
        </authorList>
    </citation>
    <scope>NUCLEOTIDE SEQUENCE [LARGE SCALE GENOMIC DNA]</scope>
    <source>
        <strain>DSM 13593 / LMG 18877 / RB2256</strain>
    </source>
</reference>
<accession>Q1GWB3</accession>